<organism>
    <name type="scientific">Sulfolobus acidocaldarius (strain ATCC 33909 / DSM 639 / JCM 8929 / NBRC 15157 / NCIMB 11770)</name>
    <dbReference type="NCBI Taxonomy" id="330779"/>
    <lineage>
        <taxon>Archaea</taxon>
        <taxon>Thermoproteota</taxon>
        <taxon>Thermoprotei</taxon>
        <taxon>Sulfolobales</taxon>
        <taxon>Sulfolobaceae</taxon>
        <taxon>Sulfolobus</taxon>
    </lineage>
</organism>
<evidence type="ECO:0000255" key="1"/>
<evidence type="ECO:0000255" key="2">
    <source>
        <dbReference type="PROSITE-ProRule" id="PRU10055"/>
    </source>
</evidence>
<evidence type="ECO:0000305" key="3"/>
<evidence type="ECO:0000305" key="4">
    <source>
    </source>
</evidence>
<sequence>MLSFPKGFKFGWSQSGFQSEMGTPGSEDPNSDWHVWVHDRENIVSQVVSGDLPENGPGYWGNYKRFHDEAEKIGLNAVRINVEWSRIFPRPLPKPEMQTGTDKENSPVISVDLNESKLREMDNYANHEALSHYRQILEDLRNRGFHIVLNMYHWTLPIWLHDPIRVRRGDFTGPTGWLNSRTVYEFARFSAYVAWKLDDLASEYATMNEPNVVWGAGYAFPRAGFPPNYLSFRLSEIAKWNIIQAHARAYDAIKSVSKKSVGIIYANTSYYPLRPQDNEAVEIAERLNRWSFFDSIIKGEITSEGQNVREDLRNRLDWIGVNYYTRTVVTKAESGYLTLPGYGDRCERNSLSLANLPTSDFGWEFFPEGLYDVLLKYWNRYGLPLYVMENGIADDADYQRPYYLVSHIYQVHRALNEGVDVRGYLHWSLADNYEWSSGFSMRFGLLKVDYLTKRLYWRPSALVYREITRSNGIPEELEHLNRVPPIKPLRH</sequence>
<protein>
    <recommendedName>
        <fullName>Beta-galactosidase</fullName>
        <shortName>Lactase</shortName>
        <ecNumber>3.2.1.23</ecNumber>
    </recommendedName>
</protein>
<name>BGAL_SULAC</name>
<accession>P14288</accession>
<accession>Q4J7S6</accession>
<keyword id="KW-0326">Glycosidase</keyword>
<keyword id="KW-0378">Hydrolase</keyword>
<keyword id="KW-1185">Reference proteome</keyword>
<reference key="1">
    <citation type="journal article" date="1989" name="Nucleic Acids Res.">
        <title>Nucleotide sequence of a thermostable beta-galactosidase from Sulfolobus solfataricus.</title>
        <authorList>
            <person name="Little S."/>
            <person name="Cartwright P."/>
            <person name="Campbell C."/>
            <person name="Prenneta A."/>
            <person name="McChesney J."/>
            <person name="Mountain A."/>
            <person name="Robinson M."/>
        </authorList>
    </citation>
    <scope>NUCLEOTIDE SEQUENCE [GENOMIC DNA]</scope>
</reference>
<reference key="2">
    <citation type="journal article" date="2005" name="J. Bacteriol.">
        <title>The genome of Sulfolobus acidocaldarius, a model organism of the Crenarchaeota.</title>
        <authorList>
            <person name="Chen L."/>
            <person name="Bruegger K."/>
            <person name="Skovgaard M."/>
            <person name="Redder P."/>
            <person name="She Q."/>
            <person name="Torarinsson E."/>
            <person name="Greve B."/>
            <person name="Awayez M."/>
            <person name="Zibat A."/>
            <person name="Klenk H.-P."/>
            <person name="Garrett R.A."/>
        </authorList>
    </citation>
    <scope>NUCLEOTIDE SEQUENCE [LARGE SCALE GENOMIC DNA]</scope>
    <source>
        <strain>ATCC 33909 / DSM 639 / JCM 8929 / NBRC 15157 / NCIMB 11770</strain>
    </source>
</reference>
<gene>
    <name type="primary">bgaS</name>
    <name type="ordered locus">Saci_1849</name>
</gene>
<comment type="catalytic activity">
    <reaction>
        <text>Hydrolysis of terminal non-reducing beta-D-galactose residues in beta-D-galactosides.</text>
        <dbReference type="EC" id="3.2.1.23"/>
    </reaction>
</comment>
<comment type="biophysicochemical properties">
    <temperatureDependence>
        <text>Thermostable.</text>
    </temperatureDependence>
</comment>
<comment type="similarity">
    <text evidence="3">Belongs to the glycosyl hydrolase 1 family.</text>
</comment>
<comment type="caution">
    <text evidence="4">Was originally thought to originate from S.solfataricus strain P1, but the culture was contaminated with S.acidocaldarius.</text>
</comment>
<dbReference type="EC" id="3.2.1.23"/>
<dbReference type="EMBL" id="X15950">
    <property type="protein sequence ID" value="CAA34074.1"/>
    <property type="molecule type" value="Genomic_DNA"/>
</dbReference>
<dbReference type="EMBL" id="CP000077">
    <property type="protein sequence ID" value="AAY81155.1"/>
    <property type="molecule type" value="Genomic_DNA"/>
</dbReference>
<dbReference type="RefSeq" id="WP_011278657.1">
    <property type="nucleotide sequence ID" value="NC_007181.1"/>
</dbReference>
<dbReference type="SMR" id="P14288"/>
<dbReference type="STRING" id="330779.Saci_1849"/>
<dbReference type="CAZy" id="GH1">
    <property type="family name" value="Glycoside Hydrolase Family 1"/>
</dbReference>
<dbReference type="GeneID" id="14552346"/>
<dbReference type="GeneID" id="78442189"/>
<dbReference type="KEGG" id="sai:Saci_1849"/>
<dbReference type="PATRIC" id="fig|330779.12.peg.1796"/>
<dbReference type="eggNOG" id="arCOG05412">
    <property type="taxonomic scope" value="Archaea"/>
</dbReference>
<dbReference type="HOGENOM" id="CLU_001859_1_3_2"/>
<dbReference type="BRENDA" id="3.2.1.B34">
    <property type="organism ID" value="6160"/>
</dbReference>
<dbReference type="Proteomes" id="UP000001018">
    <property type="component" value="Chromosome"/>
</dbReference>
<dbReference type="GO" id="GO:0004565">
    <property type="term" value="F:beta-galactosidase activity"/>
    <property type="evidence" value="ECO:0007669"/>
    <property type="project" value="UniProtKB-EC"/>
</dbReference>
<dbReference type="GO" id="GO:0008422">
    <property type="term" value="F:beta-glucosidase activity"/>
    <property type="evidence" value="ECO:0007669"/>
    <property type="project" value="TreeGrafter"/>
</dbReference>
<dbReference type="GO" id="GO:0005975">
    <property type="term" value="P:carbohydrate metabolic process"/>
    <property type="evidence" value="ECO:0007669"/>
    <property type="project" value="InterPro"/>
</dbReference>
<dbReference type="Gene3D" id="3.20.20.80">
    <property type="entry name" value="Glycosidases"/>
    <property type="match status" value="1"/>
</dbReference>
<dbReference type="InterPro" id="IPR053427">
    <property type="entry name" value="Beta-galactosidase"/>
</dbReference>
<dbReference type="InterPro" id="IPR001360">
    <property type="entry name" value="Glyco_hydro_1"/>
</dbReference>
<dbReference type="InterPro" id="IPR018120">
    <property type="entry name" value="Glyco_hydro_1_AS"/>
</dbReference>
<dbReference type="InterPro" id="IPR033132">
    <property type="entry name" value="Glyco_hydro_1_N_CS"/>
</dbReference>
<dbReference type="InterPro" id="IPR017853">
    <property type="entry name" value="Glycoside_hydrolase_SF"/>
</dbReference>
<dbReference type="NCBIfam" id="NF041004">
    <property type="entry name" value="Beta_gal_BgaS"/>
    <property type="match status" value="1"/>
</dbReference>
<dbReference type="PANTHER" id="PTHR10353:SF209">
    <property type="entry name" value="GALACTOLIPID GALACTOSYLTRANSFERASE SFR2, CHLOROPLASTIC"/>
    <property type="match status" value="1"/>
</dbReference>
<dbReference type="PANTHER" id="PTHR10353">
    <property type="entry name" value="GLYCOSYL HYDROLASE"/>
    <property type="match status" value="1"/>
</dbReference>
<dbReference type="Pfam" id="PF00232">
    <property type="entry name" value="Glyco_hydro_1"/>
    <property type="match status" value="2"/>
</dbReference>
<dbReference type="PRINTS" id="PR00131">
    <property type="entry name" value="GLHYDRLASE1"/>
</dbReference>
<dbReference type="SUPFAM" id="SSF51445">
    <property type="entry name" value="(Trans)glycosidases"/>
    <property type="match status" value="1"/>
</dbReference>
<dbReference type="PROSITE" id="PS00572">
    <property type="entry name" value="GLYCOSYL_HYDROL_F1_1"/>
    <property type="match status" value="1"/>
</dbReference>
<dbReference type="PROSITE" id="PS00653">
    <property type="entry name" value="GLYCOSYL_HYDROL_F1_2"/>
    <property type="match status" value="1"/>
</dbReference>
<feature type="chain" id="PRO_0000063866" description="Beta-galactosidase">
    <location>
        <begin position="1"/>
        <end position="491"/>
    </location>
</feature>
<feature type="active site" description="Proton donor" evidence="1">
    <location>
        <position position="209"/>
    </location>
</feature>
<feature type="active site" description="Nucleophile" evidence="2">
    <location>
        <position position="389"/>
    </location>
</feature>
<feature type="sequence conflict" description="In Ref. 1; CAA34074." evidence="3" ref="1">
    <original>Q</original>
    <variation>H</variation>
    <location>
        <position position="135"/>
    </location>
</feature>
<proteinExistence type="evidence at protein level"/>